<accession>Q1QYS2</accession>
<sequence length="250" mass="27141">MPLPLLNCDMGESFGNWKMGLDDEVMPYVDCANIACGFHASDPGIMRRTVALAVQHGVRVGAHPAYPDLQGFGRRSLACSPREVEDMMLYQIGALEGMCRAEGTRVAYVKPHGALYNDMARDPELLRGAMRAVLAYDPELPLLAMATADPAPMRALAEEMGVTLWFETFADRAYDPQGRLVSRREPGAVHHDREAIVAQAVTLARGEPLTANDGSLLHLPADTLCVHGDNAESVAAVRAIRDAFDGLARE</sequence>
<reference key="1">
    <citation type="journal article" date="2011" name="Stand. Genomic Sci.">
        <title>Complete genome sequence of the halophilic and highly halotolerant Chromohalobacter salexigens type strain (1H11(T)).</title>
        <authorList>
            <person name="Copeland A."/>
            <person name="O'Connor K."/>
            <person name="Lucas S."/>
            <person name="Lapidus A."/>
            <person name="Berry K.W."/>
            <person name="Detter J.C."/>
            <person name="Del Rio T.G."/>
            <person name="Hammon N."/>
            <person name="Dalin E."/>
            <person name="Tice H."/>
            <person name="Pitluck S."/>
            <person name="Bruce D."/>
            <person name="Goodwin L."/>
            <person name="Han C."/>
            <person name="Tapia R."/>
            <person name="Saunders E."/>
            <person name="Schmutz J."/>
            <person name="Brettin T."/>
            <person name="Larimer F."/>
            <person name="Land M."/>
            <person name="Hauser L."/>
            <person name="Vargas C."/>
            <person name="Nieto J.J."/>
            <person name="Kyrpides N.C."/>
            <person name="Ivanova N."/>
            <person name="Goker M."/>
            <person name="Klenk H.P."/>
            <person name="Csonka L.N."/>
            <person name="Woyke T."/>
        </authorList>
    </citation>
    <scope>NUCLEOTIDE SEQUENCE [LARGE SCALE GENOMIC DNA]</scope>
    <source>
        <strain>ATCC BAA-138 / DSM 3043 / CIP 106854 / NCIMB 13768 / 1H11</strain>
    </source>
</reference>
<organism>
    <name type="scientific">Chromohalobacter salexigens (strain ATCC BAA-138 / DSM 3043 / CIP 106854 / NCIMB 13768 / 1H11)</name>
    <dbReference type="NCBI Taxonomy" id="290398"/>
    <lineage>
        <taxon>Bacteria</taxon>
        <taxon>Pseudomonadati</taxon>
        <taxon>Pseudomonadota</taxon>
        <taxon>Gammaproteobacteria</taxon>
        <taxon>Oceanospirillales</taxon>
        <taxon>Halomonadaceae</taxon>
        <taxon>Chromohalobacter</taxon>
    </lineage>
</organism>
<proteinExistence type="inferred from homology"/>
<feature type="chain" id="PRO_1000045198" description="5-oxoprolinase subunit A">
    <location>
        <begin position="1"/>
        <end position="250"/>
    </location>
</feature>
<keyword id="KW-0067">ATP-binding</keyword>
<keyword id="KW-0378">Hydrolase</keyword>
<keyword id="KW-0547">Nucleotide-binding</keyword>
<keyword id="KW-1185">Reference proteome</keyword>
<name>PXPA_CHRSD</name>
<protein>
    <recommendedName>
        <fullName evidence="1">5-oxoprolinase subunit A</fullName>
        <shortName evidence="1">5-OPase subunit A</shortName>
        <ecNumber evidence="1">3.5.2.9</ecNumber>
    </recommendedName>
    <alternativeName>
        <fullName evidence="1">5-oxoprolinase (ATP-hydrolyzing) subunit A</fullName>
    </alternativeName>
</protein>
<gene>
    <name evidence="1" type="primary">pxpA</name>
    <name type="ordered locus">Csal_1029</name>
</gene>
<comment type="function">
    <text evidence="1">Catalyzes the cleavage of 5-oxoproline to form L-glutamate coupled to the hydrolysis of ATP to ADP and inorganic phosphate.</text>
</comment>
<comment type="catalytic activity">
    <reaction evidence="1">
        <text>5-oxo-L-proline + ATP + 2 H2O = L-glutamate + ADP + phosphate + H(+)</text>
        <dbReference type="Rhea" id="RHEA:10348"/>
        <dbReference type="ChEBI" id="CHEBI:15377"/>
        <dbReference type="ChEBI" id="CHEBI:15378"/>
        <dbReference type="ChEBI" id="CHEBI:29985"/>
        <dbReference type="ChEBI" id="CHEBI:30616"/>
        <dbReference type="ChEBI" id="CHEBI:43474"/>
        <dbReference type="ChEBI" id="CHEBI:58402"/>
        <dbReference type="ChEBI" id="CHEBI:456216"/>
        <dbReference type="EC" id="3.5.2.9"/>
    </reaction>
</comment>
<comment type="subunit">
    <text evidence="1">Forms a complex composed of PxpA, PxpB and PxpC.</text>
</comment>
<comment type="similarity">
    <text evidence="1">Belongs to the LamB/PxpA family.</text>
</comment>
<evidence type="ECO:0000255" key="1">
    <source>
        <dbReference type="HAMAP-Rule" id="MF_00691"/>
    </source>
</evidence>
<dbReference type="EC" id="3.5.2.9" evidence="1"/>
<dbReference type="EMBL" id="CP000285">
    <property type="protein sequence ID" value="ABE58386.1"/>
    <property type="molecule type" value="Genomic_DNA"/>
</dbReference>
<dbReference type="RefSeq" id="WP_011506332.1">
    <property type="nucleotide sequence ID" value="NC_007963.1"/>
</dbReference>
<dbReference type="SMR" id="Q1QYS2"/>
<dbReference type="STRING" id="290398.Csal_1029"/>
<dbReference type="GeneID" id="95333784"/>
<dbReference type="KEGG" id="csa:Csal_1029"/>
<dbReference type="eggNOG" id="COG1540">
    <property type="taxonomic scope" value="Bacteria"/>
</dbReference>
<dbReference type="HOGENOM" id="CLU_069535_0_0_6"/>
<dbReference type="OrthoDB" id="9773478at2"/>
<dbReference type="Proteomes" id="UP000000239">
    <property type="component" value="Chromosome"/>
</dbReference>
<dbReference type="GO" id="GO:0017168">
    <property type="term" value="F:5-oxoprolinase (ATP-hydrolyzing) activity"/>
    <property type="evidence" value="ECO:0007669"/>
    <property type="project" value="UniProtKB-UniRule"/>
</dbReference>
<dbReference type="GO" id="GO:0005524">
    <property type="term" value="F:ATP binding"/>
    <property type="evidence" value="ECO:0007669"/>
    <property type="project" value="UniProtKB-UniRule"/>
</dbReference>
<dbReference type="GO" id="GO:0005975">
    <property type="term" value="P:carbohydrate metabolic process"/>
    <property type="evidence" value="ECO:0007669"/>
    <property type="project" value="InterPro"/>
</dbReference>
<dbReference type="CDD" id="cd10787">
    <property type="entry name" value="LamB_YcsF_like"/>
    <property type="match status" value="1"/>
</dbReference>
<dbReference type="Gene3D" id="3.20.20.370">
    <property type="entry name" value="Glycoside hydrolase/deacetylase"/>
    <property type="match status" value="1"/>
</dbReference>
<dbReference type="HAMAP" id="MF_00691">
    <property type="entry name" value="PxpA"/>
    <property type="match status" value="1"/>
</dbReference>
<dbReference type="InterPro" id="IPR011330">
    <property type="entry name" value="Glyco_hydro/deAcase_b/a-brl"/>
</dbReference>
<dbReference type="InterPro" id="IPR005501">
    <property type="entry name" value="LamB/YcsF/PxpA-like"/>
</dbReference>
<dbReference type="NCBIfam" id="NF003814">
    <property type="entry name" value="PRK05406.1-3"/>
    <property type="match status" value="1"/>
</dbReference>
<dbReference type="NCBIfam" id="NF003816">
    <property type="entry name" value="PRK05406.1-5"/>
    <property type="match status" value="1"/>
</dbReference>
<dbReference type="PANTHER" id="PTHR30292:SF0">
    <property type="entry name" value="5-OXOPROLINASE SUBUNIT A"/>
    <property type="match status" value="1"/>
</dbReference>
<dbReference type="PANTHER" id="PTHR30292">
    <property type="entry name" value="UNCHARACTERIZED PROTEIN YBGL-RELATED"/>
    <property type="match status" value="1"/>
</dbReference>
<dbReference type="Pfam" id="PF03746">
    <property type="entry name" value="LamB_YcsF"/>
    <property type="match status" value="1"/>
</dbReference>
<dbReference type="SUPFAM" id="SSF88713">
    <property type="entry name" value="Glycoside hydrolase/deacetylase"/>
    <property type="match status" value="1"/>
</dbReference>